<evidence type="ECO:0000255" key="1">
    <source>
        <dbReference type="HAMAP-Rule" id="MF_00015"/>
    </source>
</evidence>
<feature type="chain" id="PRO_1000001341" description="LexA repressor">
    <location>
        <begin position="1"/>
        <end position="206"/>
    </location>
</feature>
<feature type="DNA-binding region" description="H-T-H motif" evidence="1">
    <location>
        <begin position="28"/>
        <end position="48"/>
    </location>
</feature>
<feature type="active site" description="For autocatalytic cleavage activity" evidence="1">
    <location>
        <position position="123"/>
    </location>
</feature>
<feature type="active site" description="For autocatalytic cleavage activity" evidence="1">
    <location>
        <position position="160"/>
    </location>
</feature>
<feature type="site" description="Cleavage; by autolysis" evidence="1">
    <location>
        <begin position="88"/>
        <end position="89"/>
    </location>
</feature>
<sequence length="206" mass="22734">MRPLTPRQAEILELIKRNIAETGMPPTRAEIATRLGFKSANAAEEHLKALAKKGCIEIMPGTSRGIRLPVEEEDNSETGLPLIGQVAAGEPILAQEHVEQYYQVDPSMFHPSADFLLRVKGDSMKNIGILEGDLLAVHKVQQARNGQVVVARVDDDVTVKRFEKKGNLVYLHAENEDYSPIKVDLSFQSLTIEGLAVGVIRNGDWL</sequence>
<gene>
    <name evidence="1" type="primary">lexA</name>
    <name type="ordered locus">Shewmr7_3862</name>
</gene>
<name>LEXA_SHESR</name>
<keyword id="KW-0068">Autocatalytic cleavage</keyword>
<keyword id="KW-0227">DNA damage</keyword>
<keyword id="KW-0234">DNA repair</keyword>
<keyword id="KW-0235">DNA replication</keyword>
<keyword id="KW-0238">DNA-binding</keyword>
<keyword id="KW-0378">Hydrolase</keyword>
<keyword id="KW-0678">Repressor</keyword>
<keyword id="KW-0742">SOS response</keyword>
<keyword id="KW-0804">Transcription</keyword>
<keyword id="KW-0805">Transcription regulation</keyword>
<protein>
    <recommendedName>
        <fullName evidence="1">LexA repressor</fullName>
        <ecNumber evidence="1">3.4.21.88</ecNumber>
    </recommendedName>
</protein>
<organism>
    <name type="scientific">Shewanella sp. (strain MR-7)</name>
    <dbReference type="NCBI Taxonomy" id="60481"/>
    <lineage>
        <taxon>Bacteria</taxon>
        <taxon>Pseudomonadati</taxon>
        <taxon>Pseudomonadota</taxon>
        <taxon>Gammaproteobacteria</taxon>
        <taxon>Alteromonadales</taxon>
        <taxon>Shewanellaceae</taxon>
        <taxon>Shewanella</taxon>
    </lineage>
</organism>
<proteinExistence type="inferred from homology"/>
<accession>Q0HPW6</accession>
<reference key="1">
    <citation type="submission" date="2006-08" db="EMBL/GenBank/DDBJ databases">
        <title>Complete sequence of chromosome 1 of Shewanella sp. MR-7.</title>
        <authorList>
            <person name="Copeland A."/>
            <person name="Lucas S."/>
            <person name="Lapidus A."/>
            <person name="Barry K."/>
            <person name="Detter J.C."/>
            <person name="Glavina del Rio T."/>
            <person name="Hammon N."/>
            <person name="Israni S."/>
            <person name="Dalin E."/>
            <person name="Tice H."/>
            <person name="Pitluck S."/>
            <person name="Kiss H."/>
            <person name="Brettin T."/>
            <person name="Bruce D."/>
            <person name="Han C."/>
            <person name="Tapia R."/>
            <person name="Gilna P."/>
            <person name="Schmutz J."/>
            <person name="Larimer F."/>
            <person name="Land M."/>
            <person name="Hauser L."/>
            <person name="Kyrpides N."/>
            <person name="Mikhailova N."/>
            <person name="Nealson K."/>
            <person name="Konstantinidis K."/>
            <person name="Klappenbach J."/>
            <person name="Tiedje J."/>
            <person name="Richardson P."/>
        </authorList>
    </citation>
    <scope>NUCLEOTIDE SEQUENCE [LARGE SCALE GENOMIC DNA]</scope>
    <source>
        <strain>MR-7</strain>
    </source>
</reference>
<dbReference type="EC" id="3.4.21.88" evidence="1"/>
<dbReference type="EMBL" id="CP000444">
    <property type="protein sequence ID" value="ABI44839.1"/>
    <property type="molecule type" value="Genomic_DNA"/>
</dbReference>
<dbReference type="SMR" id="Q0HPW6"/>
<dbReference type="MEROPS" id="S24.001"/>
<dbReference type="KEGG" id="shm:Shewmr7_3862"/>
<dbReference type="HOGENOM" id="CLU_066192_45_3_6"/>
<dbReference type="GO" id="GO:0003677">
    <property type="term" value="F:DNA binding"/>
    <property type="evidence" value="ECO:0007669"/>
    <property type="project" value="UniProtKB-UniRule"/>
</dbReference>
<dbReference type="GO" id="GO:0004252">
    <property type="term" value="F:serine-type endopeptidase activity"/>
    <property type="evidence" value="ECO:0007669"/>
    <property type="project" value="UniProtKB-UniRule"/>
</dbReference>
<dbReference type="GO" id="GO:0006281">
    <property type="term" value="P:DNA repair"/>
    <property type="evidence" value="ECO:0007669"/>
    <property type="project" value="UniProtKB-UniRule"/>
</dbReference>
<dbReference type="GO" id="GO:0006260">
    <property type="term" value="P:DNA replication"/>
    <property type="evidence" value="ECO:0007669"/>
    <property type="project" value="UniProtKB-UniRule"/>
</dbReference>
<dbReference type="GO" id="GO:0045892">
    <property type="term" value="P:negative regulation of DNA-templated transcription"/>
    <property type="evidence" value="ECO:0007669"/>
    <property type="project" value="UniProtKB-UniRule"/>
</dbReference>
<dbReference type="GO" id="GO:0006508">
    <property type="term" value="P:proteolysis"/>
    <property type="evidence" value="ECO:0007669"/>
    <property type="project" value="InterPro"/>
</dbReference>
<dbReference type="GO" id="GO:0009432">
    <property type="term" value="P:SOS response"/>
    <property type="evidence" value="ECO:0007669"/>
    <property type="project" value="UniProtKB-UniRule"/>
</dbReference>
<dbReference type="CDD" id="cd06529">
    <property type="entry name" value="S24_LexA-like"/>
    <property type="match status" value="1"/>
</dbReference>
<dbReference type="FunFam" id="1.10.10.10:FF:000009">
    <property type="entry name" value="LexA repressor"/>
    <property type="match status" value="1"/>
</dbReference>
<dbReference type="FunFam" id="2.10.109.10:FF:000001">
    <property type="entry name" value="LexA repressor"/>
    <property type="match status" value="1"/>
</dbReference>
<dbReference type="Gene3D" id="2.10.109.10">
    <property type="entry name" value="Umud Fragment, subunit A"/>
    <property type="match status" value="1"/>
</dbReference>
<dbReference type="Gene3D" id="1.10.10.10">
    <property type="entry name" value="Winged helix-like DNA-binding domain superfamily/Winged helix DNA-binding domain"/>
    <property type="match status" value="1"/>
</dbReference>
<dbReference type="HAMAP" id="MF_00015">
    <property type="entry name" value="LexA"/>
    <property type="match status" value="1"/>
</dbReference>
<dbReference type="InterPro" id="IPR006200">
    <property type="entry name" value="LexA"/>
</dbReference>
<dbReference type="InterPro" id="IPR039418">
    <property type="entry name" value="LexA-like"/>
</dbReference>
<dbReference type="InterPro" id="IPR036286">
    <property type="entry name" value="LexA/Signal_pep-like_sf"/>
</dbReference>
<dbReference type="InterPro" id="IPR006199">
    <property type="entry name" value="LexA_DNA-bd_dom"/>
</dbReference>
<dbReference type="InterPro" id="IPR050077">
    <property type="entry name" value="LexA_repressor"/>
</dbReference>
<dbReference type="InterPro" id="IPR006197">
    <property type="entry name" value="Peptidase_S24_LexA"/>
</dbReference>
<dbReference type="InterPro" id="IPR015927">
    <property type="entry name" value="Peptidase_S24_S26A/B/C"/>
</dbReference>
<dbReference type="InterPro" id="IPR036388">
    <property type="entry name" value="WH-like_DNA-bd_sf"/>
</dbReference>
<dbReference type="InterPro" id="IPR036390">
    <property type="entry name" value="WH_DNA-bd_sf"/>
</dbReference>
<dbReference type="NCBIfam" id="TIGR00498">
    <property type="entry name" value="lexA"/>
    <property type="match status" value="1"/>
</dbReference>
<dbReference type="PANTHER" id="PTHR33516">
    <property type="entry name" value="LEXA REPRESSOR"/>
    <property type="match status" value="1"/>
</dbReference>
<dbReference type="PANTHER" id="PTHR33516:SF2">
    <property type="entry name" value="LEXA REPRESSOR-RELATED"/>
    <property type="match status" value="1"/>
</dbReference>
<dbReference type="Pfam" id="PF01726">
    <property type="entry name" value="LexA_DNA_bind"/>
    <property type="match status" value="1"/>
</dbReference>
<dbReference type="Pfam" id="PF00717">
    <property type="entry name" value="Peptidase_S24"/>
    <property type="match status" value="1"/>
</dbReference>
<dbReference type="PRINTS" id="PR00726">
    <property type="entry name" value="LEXASERPTASE"/>
</dbReference>
<dbReference type="SUPFAM" id="SSF51306">
    <property type="entry name" value="LexA/Signal peptidase"/>
    <property type="match status" value="1"/>
</dbReference>
<dbReference type="SUPFAM" id="SSF46785">
    <property type="entry name" value="Winged helix' DNA-binding domain"/>
    <property type="match status" value="1"/>
</dbReference>
<comment type="function">
    <text evidence="1">Represses a number of genes involved in the response to DNA damage (SOS response), including recA and lexA. In the presence of single-stranded DNA, RecA interacts with LexA causing an autocatalytic cleavage which disrupts the DNA-binding part of LexA, leading to derepression of the SOS regulon and eventually DNA repair.</text>
</comment>
<comment type="catalytic activity">
    <reaction evidence="1">
        <text>Hydrolysis of Ala-|-Gly bond in repressor LexA.</text>
        <dbReference type="EC" id="3.4.21.88"/>
    </reaction>
</comment>
<comment type="subunit">
    <text evidence="1">Homodimer.</text>
</comment>
<comment type="similarity">
    <text evidence="1">Belongs to the peptidase S24 family.</text>
</comment>